<accession>Q39WU7</accession>
<proteinExistence type="inferred from homology"/>
<feature type="chain" id="PRO_1000085673" description="Cyclic pyranopterin monophosphate synthase">
    <location>
        <begin position="1"/>
        <end position="160"/>
    </location>
</feature>
<feature type="active site" evidence="1">
    <location>
        <position position="127"/>
    </location>
</feature>
<feature type="binding site" evidence="1">
    <location>
        <begin position="74"/>
        <end position="76"/>
    </location>
    <ligand>
        <name>substrate</name>
    </ligand>
</feature>
<feature type="binding site" evidence="1">
    <location>
        <begin position="112"/>
        <end position="113"/>
    </location>
    <ligand>
        <name>substrate</name>
    </ligand>
</feature>
<name>MOAC_GEOMG</name>
<comment type="function">
    <text evidence="1">Catalyzes the conversion of (8S)-3',8-cyclo-7,8-dihydroguanosine 5'-triphosphate to cyclic pyranopterin monophosphate (cPMP).</text>
</comment>
<comment type="catalytic activity">
    <reaction evidence="1">
        <text>(8S)-3',8-cyclo-7,8-dihydroguanosine 5'-triphosphate = cyclic pyranopterin phosphate + diphosphate</text>
        <dbReference type="Rhea" id="RHEA:49580"/>
        <dbReference type="ChEBI" id="CHEBI:33019"/>
        <dbReference type="ChEBI" id="CHEBI:59648"/>
        <dbReference type="ChEBI" id="CHEBI:131766"/>
        <dbReference type="EC" id="4.6.1.17"/>
    </reaction>
</comment>
<comment type="pathway">
    <text evidence="1">Cofactor biosynthesis; molybdopterin biosynthesis.</text>
</comment>
<comment type="subunit">
    <text evidence="1">Homohexamer; trimer of dimers.</text>
</comment>
<comment type="similarity">
    <text evidence="1">Belongs to the MoaC family.</text>
</comment>
<reference key="1">
    <citation type="journal article" date="2009" name="BMC Microbiol.">
        <title>The genome sequence of Geobacter metallireducens: features of metabolism, physiology and regulation common and dissimilar to Geobacter sulfurreducens.</title>
        <authorList>
            <person name="Aklujkar M."/>
            <person name="Krushkal J."/>
            <person name="DiBartolo G."/>
            <person name="Lapidus A."/>
            <person name="Land M.L."/>
            <person name="Lovley D.R."/>
        </authorList>
    </citation>
    <scope>NUCLEOTIDE SEQUENCE [LARGE SCALE GENOMIC DNA]</scope>
    <source>
        <strain>ATCC 53774 / DSM 7210 / GS-15</strain>
    </source>
</reference>
<evidence type="ECO:0000255" key="1">
    <source>
        <dbReference type="HAMAP-Rule" id="MF_01224"/>
    </source>
</evidence>
<sequence length="160" mass="16853">MSFNHFDDQGRAIMVDVSGKQPTLRTATAAATVAMKPETLADLLAGRTTKGDVLGVARLAGIAAAKKTPELIPLSHPLAIHHAAVDFETEPETGTITVKATVRAFERTGVEMEAMTSAAVAALTIYDMCKGADKGITIGDICLLFKEGGKSGTWQREEPA</sequence>
<organism>
    <name type="scientific">Geobacter metallireducens (strain ATCC 53774 / DSM 7210 / GS-15)</name>
    <dbReference type="NCBI Taxonomy" id="269799"/>
    <lineage>
        <taxon>Bacteria</taxon>
        <taxon>Pseudomonadati</taxon>
        <taxon>Thermodesulfobacteriota</taxon>
        <taxon>Desulfuromonadia</taxon>
        <taxon>Geobacterales</taxon>
        <taxon>Geobacteraceae</taxon>
        <taxon>Geobacter</taxon>
    </lineage>
</organism>
<protein>
    <recommendedName>
        <fullName evidence="1">Cyclic pyranopterin monophosphate synthase</fullName>
        <ecNumber evidence="1">4.6.1.17</ecNumber>
    </recommendedName>
    <alternativeName>
        <fullName evidence="1">Molybdenum cofactor biosynthesis protein C</fullName>
    </alternativeName>
</protein>
<keyword id="KW-0456">Lyase</keyword>
<keyword id="KW-0501">Molybdenum cofactor biosynthesis</keyword>
<keyword id="KW-1185">Reference proteome</keyword>
<dbReference type="EC" id="4.6.1.17" evidence="1"/>
<dbReference type="EMBL" id="CP000148">
    <property type="protein sequence ID" value="ABB31277.1"/>
    <property type="molecule type" value="Genomic_DNA"/>
</dbReference>
<dbReference type="RefSeq" id="WP_004513210.1">
    <property type="nucleotide sequence ID" value="NC_007517.1"/>
</dbReference>
<dbReference type="SMR" id="Q39WU7"/>
<dbReference type="STRING" id="269799.Gmet_1037"/>
<dbReference type="KEGG" id="gme:Gmet_1037"/>
<dbReference type="eggNOG" id="COG0315">
    <property type="taxonomic scope" value="Bacteria"/>
</dbReference>
<dbReference type="HOGENOM" id="CLU_074693_1_0_7"/>
<dbReference type="UniPathway" id="UPA00344"/>
<dbReference type="Proteomes" id="UP000007073">
    <property type="component" value="Chromosome"/>
</dbReference>
<dbReference type="GO" id="GO:0061799">
    <property type="term" value="F:cyclic pyranopterin monophosphate synthase activity"/>
    <property type="evidence" value="ECO:0007669"/>
    <property type="project" value="UniProtKB-UniRule"/>
</dbReference>
<dbReference type="GO" id="GO:0006777">
    <property type="term" value="P:Mo-molybdopterin cofactor biosynthetic process"/>
    <property type="evidence" value="ECO:0007669"/>
    <property type="project" value="UniProtKB-UniRule"/>
</dbReference>
<dbReference type="CDD" id="cd01420">
    <property type="entry name" value="MoaC_PE"/>
    <property type="match status" value="1"/>
</dbReference>
<dbReference type="Gene3D" id="3.30.70.640">
    <property type="entry name" value="Molybdopterin cofactor biosynthesis C (MoaC) domain"/>
    <property type="match status" value="1"/>
</dbReference>
<dbReference type="HAMAP" id="MF_01224_B">
    <property type="entry name" value="MoaC_B"/>
    <property type="match status" value="1"/>
</dbReference>
<dbReference type="InterPro" id="IPR023045">
    <property type="entry name" value="MoaC"/>
</dbReference>
<dbReference type="InterPro" id="IPR047594">
    <property type="entry name" value="MoaC_bact/euk"/>
</dbReference>
<dbReference type="InterPro" id="IPR036522">
    <property type="entry name" value="MoaC_sf"/>
</dbReference>
<dbReference type="InterPro" id="IPR050105">
    <property type="entry name" value="MoCo_biosynth_MoaA/MoaC"/>
</dbReference>
<dbReference type="InterPro" id="IPR002820">
    <property type="entry name" value="Mopterin_CF_biosynth-C_dom"/>
</dbReference>
<dbReference type="NCBIfam" id="TIGR00581">
    <property type="entry name" value="moaC"/>
    <property type="match status" value="1"/>
</dbReference>
<dbReference type="NCBIfam" id="NF006870">
    <property type="entry name" value="PRK09364.1"/>
    <property type="match status" value="1"/>
</dbReference>
<dbReference type="PANTHER" id="PTHR22960:SF29">
    <property type="entry name" value="CYCLIC PYRANOPTERIN MONOPHOSPHATE SYNTHASE"/>
    <property type="match status" value="1"/>
</dbReference>
<dbReference type="PANTHER" id="PTHR22960">
    <property type="entry name" value="MOLYBDOPTERIN COFACTOR SYNTHESIS PROTEIN A"/>
    <property type="match status" value="1"/>
</dbReference>
<dbReference type="Pfam" id="PF01967">
    <property type="entry name" value="MoaC"/>
    <property type="match status" value="1"/>
</dbReference>
<dbReference type="SUPFAM" id="SSF55040">
    <property type="entry name" value="Molybdenum cofactor biosynthesis protein C, MoaC"/>
    <property type="match status" value="1"/>
</dbReference>
<gene>
    <name evidence="1" type="primary">moaC</name>
    <name type="ordered locus">Gmet_1037</name>
</gene>